<reference key="1">
    <citation type="journal article" date="1995" name="Gene">
        <title>Structures of genes encoding TATA box-binding proteins from Trimeresurus gramineus and T. flavoviridis snakes.</title>
        <authorList>
            <person name="Nakashima K."/>
            <person name="Nobuhisa I."/>
            <person name="Deshimaru M."/>
            <person name="Ogawa T."/>
            <person name="Shimohigashi Y."/>
            <person name="Fukumaki Y."/>
            <person name="Hattori M."/>
            <person name="Sakaki Y."/>
            <person name="Hattori S."/>
            <person name="Ohno M."/>
        </authorList>
    </citation>
    <scope>NUCLEOTIDE SEQUENCE [GENOMIC DNA]</scope>
    <source>
        <tissue>Liver</tissue>
        <tissue>Venom gland</tissue>
    </source>
</reference>
<keyword id="KW-0238">DNA-binding</keyword>
<keyword id="KW-0539">Nucleus</keyword>
<keyword id="KW-0677">Repeat</keyword>
<keyword id="KW-0804">Transcription</keyword>
<organism>
    <name type="scientific">Craspedocephalus gramineus</name>
    <name type="common">Bamboo pit viper</name>
    <name type="synonym">Trimeresurus gramineus</name>
    <dbReference type="NCBI Taxonomy" id="8767"/>
    <lineage>
        <taxon>Eukaryota</taxon>
        <taxon>Metazoa</taxon>
        <taxon>Chordata</taxon>
        <taxon>Craniata</taxon>
        <taxon>Vertebrata</taxon>
        <taxon>Euteleostomi</taxon>
        <taxon>Lepidosauria</taxon>
        <taxon>Squamata</taxon>
        <taxon>Bifurcata</taxon>
        <taxon>Unidentata</taxon>
        <taxon>Episquamata</taxon>
        <taxon>Toxicofera</taxon>
        <taxon>Serpentes</taxon>
        <taxon>Colubroidea</taxon>
        <taxon>Viperidae</taxon>
        <taxon>Crotalinae</taxon>
        <taxon>Craspedocephalus</taxon>
    </lineage>
</organism>
<proteinExistence type="inferred from homology"/>
<feature type="chain" id="PRO_0000153961" description="TATA-box-binding protein">
    <location>
        <begin position="1"/>
        <end position="302"/>
    </location>
</feature>
<feature type="repeat" description="1">
    <location>
        <begin position="128"/>
        <end position="204"/>
    </location>
</feature>
<feature type="repeat" description="2">
    <location>
        <begin position="218"/>
        <end position="295"/>
    </location>
</feature>
<feature type="region of interest" description="Disordered" evidence="2">
    <location>
        <begin position="1"/>
        <end position="22"/>
    </location>
</feature>
<feature type="region of interest" description="Disordered" evidence="2">
    <location>
        <begin position="53"/>
        <end position="122"/>
    </location>
</feature>
<feature type="compositionally biased region" description="Low complexity" evidence="2">
    <location>
        <begin position="57"/>
        <end position="101"/>
    </location>
</feature>
<feature type="compositionally biased region" description="Low complexity" evidence="2">
    <location>
        <begin position="109"/>
        <end position="119"/>
    </location>
</feature>
<gene>
    <name type="primary">TBP</name>
</gene>
<sequence>MDQNNSLPPYAQGLASPQSAMTPGIPIFSPMMPYGTGLTPQPAQSTNSLSILEEQQRQQQQQQAAAQQSTSQPTQAPSGQTPQLFHSQTLTTAPLPGTTPLYPSPMTPMTPITPATPASESSGIVPQLQNIVSTVNLGCKLDLKTIALRARNAEYNPKRFAAVIMRIREPRTTALIFSSGKMVCTGAKSEEQSRLAARKYARVVQKLGFPAKFLDFKIQNMVGSCDVKFPIRLEGLVLTHQQFSSYEPELFPGLIYRMIKPRIVLLIFVSGKVVLTGAKVRGEIYEAFENIYPILKGFRKTT</sequence>
<protein>
    <recommendedName>
        <fullName>TATA-box-binding protein</fullName>
    </recommendedName>
    <alternativeName>
        <fullName>TATA sequence-binding protein</fullName>
    </alternativeName>
    <alternativeName>
        <fullName>TATA-binding factor</fullName>
    </alternativeName>
    <alternativeName>
        <fullName>TATA-box factor</fullName>
    </alternativeName>
    <alternativeName>
        <fullName>Transcription initiation factor TFIID TBP subunit</fullName>
    </alternativeName>
</protein>
<evidence type="ECO:0000250" key="1">
    <source>
        <dbReference type="UniProtKB" id="P20226"/>
    </source>
</evidence>
<evidence type="ECO:0000256" key="2">
    <source>
        <dbReference type="SAM" id="MobiDB-lite"/>
    </source>
</evidence>
<evidence type="ECO:0000305" key="3"/>
<name>TBP_CRAGM</name>
<comment type="function">
    <text>General transcription factor that functions at the core of the DNA-binding multiprotein factor TFIID. Binding of TFIID to the TATA box is the initial transcriptional step of the pre-initiation complex (PIC), playing a role in the activation of eukaryotic genes transcribed by RNA polymerase II.</text>
</comment>
<comment type="subunit">
    <text evidence="1">Belongs to the TFIID complex together with the TBP-associated factors (TAFs). Binds DNA as monomer.</text>
</comment>
<comment type="subcellular location">
    <subcellularLocation>
        <location evidence="1">Nucleus</location>
    </subcellularLocation>
</comment>
<comment type="similarity">
    <text evidence="3">Belongs to the TBP family.</text>
</comment>
<accession>Q92146</accession>
<dbReference type="EMBL" id="D31782">
    <property type="protein sequence ID" value="BAA06560.1"/>
    <property type="molecule type" value="Genomic_DNA"/>
</dbReference>
<dbReference type="EMBL" id="D31776">
    <property type="protein sequence ID" value="BAA06554.1"/>
    <property type="molecule type" value="Genomic_DNA"/>
</dbReference>
<dbReference type="PIR" id="JC4059">
    <property type="entry name" value="JC4059"/>
</dbReference>
<dbReference type="SMR" id="Q92146"/>
<dbReference type="GO" id="GO:0005634">
    <property type="term" value="C:nucleus"/>
    <property type="evidence" value="ECO:0000250"/>
    <property type="project" value="UniProtKB"/>
</dbReference>
<dbReference type="GO" id="GO:0005669">
    <property type="term" value="C:transcription factor TFIID complex"/>
    <property type="evidence" value="ECO:0000250"/>
    <property type="project" value="UniProtKB"/>
</dbReference>
<dbReference type="GO" id="GO:0003677">
    <property type="term" value="F:DNA binding"/>
    <property type="evidence" value="ECO:0007669"/>
    <property type="project" value="UniProtKB-KW"/>
</dbReference>
<dbReference type="GO" id="GO:0000995">
    <property type="term" value="F:RNA polymerase III general transcription initiation factor activity"/>
    <property type="evidence" value="ECO:0000250"/>
    <property type="project" value="UniProtKB"/>
</dbReference>
<dbReference type="GO" id="GO:0006352">
    <property type="term" value="P:DNA-templated transcription initiation"/>
    <property type="evidence" value="ECO:0007669"/>
    <property type="project" value="InterPro"/>
</dbReference>
<dbReference type="GO" id="GO:0006366">
    <property type="term" value="P:transcription by RNA polymerase II"/>
    <property type="evidence" value="ECO:0000250"/>
    <property type="project" value="UniProtKB"/>
</dbReference>
<dbReference type="GO" id="GO:0006383">
    <property type="term" value="P:transcription by RNA polymerase III"/>
    <property type="evidence" value="ECO:0000250"/>
    <property type="project" value="UniProtKB"/>
</dbReference>
<dbReference type="CDD" id="cd04516">
    <property type="entry name" value="TBP_eukaryotes"/>
    <property type="match status" value="1"/>
</dbReference>
<dbReference type="FunFam" id="3.30.310.10:FF:000001">
    <property type="entry name" value="TATA-box-binding protein 2"/>
    <property type="match status" value="1"/>
</dbReference>
<dbReference type="FunFam" id="3.30.310.10:FF:000002">
    <property type="entry name" value="TATA-box-binding protein 2"/>
    <property type="match status" value="1"/>
</dbReference>
<dbReference type="Gene3D" id="3.30.310.10">
    <property type="entry name" value="TATA-Binding Protein"/>
    <property type="match status" value="2"/>
</dbReference>
<dbReference type="HAMAP" id="MF_00408">
    <property type="entry name" value="TATA_bind_prot_arch"/>
    <property type="match status" value="1"/>
</dbReference>
<dbReference type="InterPro" id="IPR000814">
    <property type="entry name" value="TBP"/>
</dbReference>
<dbReference type="InterPro" id="IPR030491">
    <property type="entry name" value="TBP_CS"/>
</dbReference>
<dbReference type="InterPro" id="IPR012295">
    <property type="entry name" value="TBP_dom_sf"/>
</dbReference>
<dbReference type="InterPro" id="IPR033710">
    <property type="entry name" value="TBP_eukaryotic"/>
</dbReference>
<dbReference type="PANTHER" id="PTHR10126">
    <property type="entry name" value="TATA-BOX BINDING PROTEIN"/>
    <property type="match status" value="1"/>
</dbReference>
<dbReference type="Pfam" id="PF00352">
    <property type="entry name" value="TBP"/>
    <property type="match status" value="2"/>
</dbReference>
<dbReference type="PRINTS" id="PR00686">
    <property type="entry name" value="TIFACTORIID"/>
</dbReference>
<dbReference type="SUPFAM" id="SSF55945">
    <property type="entry name" value="TATA-box binding protein-like"/>
    <property type="match status" value="2"/>
</dbReference>
<dbReference type="PROSITE" id="PS00351">
    <property type="entry name" value="TFIID"/>
    <property type="match status" value="2"/>
</dbReference>